<feature type="chain" id="PRO_0000338531" description="DNA mismatch repair protein MSH3">
    <location>
        <begin position="1"/>
        <end position="1154"/>
    </location>
</feature>
<feature type="region of interest" description="Disordered" evidence="3">
    <location>
        <begin position="1"/>
        <end position="119"/>
    </location>
</feature>
<feature type="region of interest" description="Disordered" evidence="3">
    <location>
        <begin position="172"/>
        <end position="233"/>
    </location>
</feature>
<feature type="region of interest" description="Mispair-binding domain" evidence="1">
    <location>
        <begin position="228"/>
        <end position="342"/>
    </location>
</feature>
<feature type="compositionally biased region" description="Polar residues" evidence="3">
    <location>
        <begin position="21"/>
        <end position="60"/>
    </location>
</feature>
<feature type="compositionally biased region" description="Basic and acidic residues" evidence="3">
    <location>
        <begin position="69"/>
        <end position="83"/>
    </location>
</feature>
<feature type="compositionally biased region" description="Polar residues" evidence="3">
    <location>
        <begin position="183"/>
        <end position="195"/>
    </location>
</feature>
<feature type="binding site" evidence="2">
    <location>
        <begin position="929"/>
        <end position="936"/>
    </location>
    <ligand>
        <name>ATP</name>
        <dbReference type="ChEBI" id="CHEBI:30616"/>
    </ligand>
</feature>
<sequence>MPPPPSQKPGQASISAFFKPKSSQRPITKSCQPDRAQVSNGYARTSNLLDTDTGASSSAQPPHKRSKLNNKDGPRRETIDRMSKWKFTALQPSDNVSSELDEAASQATPTERSQHDQARHDAFRKTLLGPNFAIDRHASNQMQIDDMSSAHTFSHSESRTSTGTKVDAMVVDDDDDDDDNQHEQAAQSVPGTWNRFTGLAAPESTPAPCSHRDSSMNKTKGKPKASGAGTGPSYTPLEKQILELKAEHPGVLLIIEVGYKLKFYGEDARIASKELSIMCFPERNLLTAMIPVHRLHIHVKRLIQAGHKVGVVRQIETRALKAASKNAYTPFVRKLTALYTASTWVDDLSSLDDLAANMGDAYTNQPKSLMAIVEQSERGNAQADRVSIGIVSVEVNTGHLTYDQFSDGHARSELETRIAHLAPAEVLIPPQLTKPTEKVISYLLGNGADGGVRIERLAAMPDYNQAFQSVTRFYRDRGLESPEVPEVPEVPGSSEADTTRLATTLADGADKRSSPLISLIVSLPQLSLIALAQIIQHLQAFQLESICTLSTNFRSFSSRTTMLLNSNTLANLEIFRTANEQTERGSLIWLLDKCKSAMGRRLLRKWVSRPLTDIDKLQERLDAVEALRDGKSYVLRRLDSVLHGLPDLERGLARMTYGRATPTELATVLLSLNRVTQEFKADEAATWKTQSSLIDTHLLSLASGKQVVQTYLNQISIKEARANNKADLYLDADVFPAIQASKDNMAIIDGELREHLREIRKLLHRPSLDYVSVAGVDYLVEVRVADAKKVPVEWLRVSATKSMVRFHTPEVMRLSKIRDQHKETLDAAAQEAFARFVRELCKSEYVVLRNVVASLAVLDVLLSLAHVARAAGYTRPVFLRQPQDAEASVPVEIIGMRHAILEVVSAMPYIPNDVSLSTGDSGAAILLSGCNMGGKSSVVRALGLVIIMAQIGSFVAADVARIGVHDAVYVRMGARDRMFSGRSTYMVEVSETADILGSLTSRSMVILDELGRGTSSRDGYCLAAGVLEYLLTLGCPPNTVFITHYLQLASMQRRYPHLRNMHMAFTSNSRNLLDPIHLVYKLRPGIAHSFGIHAAHLARLPLQIIHSASTISSALYAKHTNRSAFLVLKHAFANPPQLATVSTLQHLLFTHPPT</sequence>
<dbReference type="EMBL" id="CM003151">
    <property type="protein sequence ID" value="KIS67780.1"/>
    <property type="molecule type" value="Genomic_DNA"/>
</dbReference>
<dbReference type="RefSeq" id="XP_011390736.1">
    <property type="nucleotide sequence ID" value="XM_011392434.1"/>
</dbReference>
<dbReference type="SMR" id="Q4P6I8"/>
<dbReference type="FunCoup" id="Q4P6I8">
    <property type="interactions" value="532"/>
</dbReference>
<dbReference type="STRING" id="237631.Q4P6I8"/>
<dbReference type="EnsemblFungi" id="KIS67780">
    <property type="protein sequence ID" value="KIS67780"/>
    <property type="gene ID" value="UMAG_04275"/>
</dbReference>
<dbReference type="GeneID" id="23564507"/>
<dbReference type="KEGG" id="uma:UMAG_04275"/>
<dbReference type="VEuPathDB" id="FungiDB:UMAG_04275"/>
<dbReference type="eggNOG" id="KOG0218">
    <property type="taxonomic scope" value="Eukaryota"/>
</dbReference>
<dbReference type="HOGENOM" id="CLU_002472_0_2_1"/>
<dbReference type="InParanoid" id="Q4P6I8"/>
<dbReference type="OMA" id="INMHAAR"/>
<dbReference type="OrthoDB" id="121051at2759"/>
<dbReference type="Proteomes" id="UP000000561">
    <property type="component" value="Chromosome 12"/>
</dbReference>
<dbReference type="GO" id="GO:0005634">
    <property type="term" value="C:nucleus"/>
    <property type="evidence" value="ECO:0000318"/>
    <property type="project" value="GO_Central"/>
</dbReference>
<dbReference type="GO" id="GO:0005524">
    <property type="term" value="F:ATP binding"/>
    <property type="evidence" value="ECO:0007669"/>
    <property type="project" value="UniProtKB-KW"/>
</dbReference>
<dbReference type="GO" id="GO:0140664">
    <property type="term" value="F:ATP-dependent DNA damage sensor activity"/>
    <property type="evidence" value="ECO:0007669"/>
    <property type="project" value="InterPro"/>
</dbReference>
<dbReference type="GO" id="GO:0003690">
    <property type="term" value="F:double-stranded DNA binding"/>
    <property type="evidence" value="ECO:0000318"/>
    <property type="project" value="GO_Central"/>
</dbReference>
<dbReference type="GO" id="GO:0030983">
    <property type="term" value="F:mismatched DNA binding"/>
    <property type="evidence" value="ECO:0007669"/>
    <property type="project" value="InterPro"/>
</dbReference>
<dbReference type="GO" id="GO:0006298">
    <property type="term" value="P:mismatch repair"/>
    <property type="evidence" value="ECO:0007669"/>
    <property type="project" value="InterPro"/>
</dbReference>
<dbReference type="FunFam" id="3.40.1170.10:FF:000004">
    <property type="entry name" value="DNA mismatch repair protein"/>
    <property type="match status" value="1"/>
</dbReference>
<dbReference type="FunFam" id="3.40.50.300:FF:004175">
    <property type="entry name" value="DNA mismatch repair protein MSH3"/>
    <property type="match status" value="1"/>
</dbReference>
<dbReference type="FunFam" id="1.10.1420.10:FF:000004">
    <property type="entry name" value="DNA mismatch repair protein Msh3"/>
    <property type="match status" value="1"/>
</dbReference>
<dbReference type="Gene3D" id="1.10.1420.10">
    <property type="match status" value="2"/>
</dbReference>
<dbReference type="Gene3D" id="3.40.1170.10">
    <property type="entry name" value="DNA repair protein MutS, domain I"/>
    <property type="match status" value="1"/>
</dbReference>
<dbReference type="Gene3D" id="3.30.420.110">
    <property type="entry name" value="MutS, connector domain"/>
    <property type="match status" value="1"/>
</dbReference>
<dbReference type="Gene3D" id="3.40.50.300">
    <property type="entry name" value="P-loop containing nucleotide triphosphate hydrolases"/>
    <property type="match status" value="1"/>
</dbReference>
<dbReference type="InterPro" id="IPR007695">
    <property type="entry name" value="DNA_mismatch_repair_MutS-lik_N"/>
</dbReference>
<dbReference type="InterPro" id="IPR017261">
    <property type="entry name" value="DNA_mismatch_repair_MutS/MSH"/>
</dbReference>
<dbReference type="InterPro" id="IPR000432">
    <property type="entry name" value="DNA_mismatch_repair_MutS_C"/>
</dbReference>
<dbReference type="InterPro" id="IPR007861">
    <property type="entry name" value="DNA_mismatch_repair_MutS_clamp"/>
</dbReference>
<dbReference type="InterPro" id="IPR007696">
    <property type="entry name" value="DNA_mismatch_repair_MutS_core"/>
</dbReference>
<dbReference type="InterPro" id="IPR016151">
    <property type="entry name" value="DNA_mismatch_repair_MutS_N"/>
</dbReference>
<dbReference type="InterPro" id="IPR036187">
    <property type="entry name" value="DNA_mismatch_repair_MutS_sf"/>
</dbReference>
<dbReference type="InterPro" id="IPR007860">
    <property type="entry name" value="DNA_mmatch_repair_MutS_con_dom"/>
</dbReference>
<dbReference type="InterPro" id="IPR045076">
    <property type="entry name" value="MutS"/>
</dbReference>
<dbReference type="InterPro" id="IPR036678">
    <property type="entry name" value="MutS_con_dom_sf"/>
</dbReference>
<dbReference type="InterPro" id="IPR027417">
    <property type="entry name" value="P-loop_NTPase"/>
</dbReference>
<dbReference type="PANTHER" id="PTHR11361:SF150">
    <property type="entry name" value="DNA MISMATCH REPAIR PROTEIN MSH6"/>
    <property type="match status" value="1"/>
</dbReference>
<dbReference type="PANTHER" id="PTHR11361">
    <property type="entry name" value="DNA MISMATCH REPAIR PROTEIN MUTS FAMILY MEMBER"/>
    <property type="match status" value="1"/>
</dbReference>
<dbReference type="Pfam" id="PF01624">
    <property type="entry name" value="MutS_I"/>
    <property type="match status" value="1"/>
</dbReference>
<dbReference type="Pfam" id="PF05188">
    <property type="entry name" value="MutS_II"/>
    <property type="match status" value="1"/>
</dbReference>
<dbReference type="Pfam" id="PF05192">
    <property type="entry name" value="MutS_III"/>
    <property type="match status" value="1"/>
</dbReference>
<dbReference type="Pfam" id="PF05190">
    <property type="entry name" value="MutS_IV"/>
    <property type="match status" value="1"/>
</dbReference>
<dbReference type="Pfam" id="PF00488">
    <property type="entry name" value="MutS_V"/>
    <property type="match status" value="1"/>
</dbReference>
<dbReference type="PIRSF" id="PIRSF037677">
    <property type="entry name" value="DNA_mis_repair_Msh6"/>
    <property type="match status" value="1"/>
</dbReference>
<dbReference type="SMART" id="SM00534">
    <property type="entry name" value="MUTSac"/>
    <property type="match status" value="1"/>
</dbReference>
<dbReference type="SMART" id="SM00533">
    <property type="entry name" value="MUTSd"/>
    <property type="match status" value="1"/>
</dbReference>
<dbReference type="SUPFAM" id="SSF55271">
    <property type="entry name" value="DNA repair protein MutS, domain I"/>
    <property type="match status" value="1"/>
</dbReference>
<dbReference type="SUPFAM" id="SSF53150">
    <property type="entry name" value="DNA repair protein MutS, domain II"/>
    <property type="match status" value="1"/>
</dbReference>
<dbReference type="SUPFAM" id="SSF48334">
    <property type="entry name" value="DNA repair protein MutS, domain III"/>
    <property type="match status" value="1"/>
</dbReference>
<dbReference type="SUPFAM" id="SSF52540">
    <property type="entry name" value="P-loop containing nucleoside triphosphate hydrolases"/>
    <property type="match status" value="1"/>
</dbReference>
<dbReference type="PROSITE" id="PS00486">
    <property type="entry name" value="DNA_MISMATCH_REPAIR_2"/>
    <property type="match status" value="1"/>
</dbReference>
<reference key="1">
    <citation type="journal article" date="2006" name="Nature">
        <title>Insights from the genome of the biotrophic fungal plant pathogen Ustilago maydis.</title>
        <authorList>
            <person name="Kaemper J."/>
            <person name="Kahmann R."/>
            <person name="Boelker M."/>
            <person name="Ma L.-J."/>
            <person name="Brefort T."/>
            <person name="Saville B.J."/>
            <person name="Banuett F."/>
            <person name="Kronstad J.W."/>
            <person name="Gold S.E."/>
            <person name="Mueller O."/>
            <person name="Perlin M.H."/>
            <person name="Woesten H.A.B."/>
            <person name="de Vries R."/>
            <person name="Ruiz-Herrera J."/>
            <person name="Reynaga-Pena C.G."/>
            <person name="Snetselaar K."/>
            <person name="McCann M."/>
            <person name="Perez-Martin J."/>
            <person name="Feldbruegge M."/>
            <person name="Basse C.W."/>
            <person name="Steinberg G."/>
            <person name="Ibeas J.I."/>
            <person name="Holloman W."/>
            <person name="Guzman P."/>
            <person name="Farman M.L."/>
            <person name="Stajich J.E."/>
            <person name="Sentandreu R."/>
            <person name="Gonzalez-Prieto J.M."/>
            <person name="Kennell J.C."/>
            <person name="Molina L."/>
            <person name="Schirawski J."/>
            <person name="Mendoza-Mendoza A."/>
            <person name="Greilinger D."/>
            <person name="Muench K."/>
            <person name="Roessel N."/>
            <person name="Scherer M."/>
            <person name="Vranes M."/>
            <person name="Ladendorf O."/>
            <person name="Vincon V."/>
            <person name="Fuchs U."/>
            <person name="Sandrock B."/>
            <person name="Meng S."/>
            <person name="Ho E.C.H."/>
            <person name="Cahill M.J."/>
            <person name="Boyce K.J."/>
            <person name="Klose J."/>
            <person name="Klosterman S.J."/>
            <person name="Deelstra H.J."/>
            <person name="Ortiz-Castellanos L."/>
            <person name="Li W."/>
            <person name="Sanchez-Alonso P."/>
            <person name="Schreier P.H."/>
            <person name="Haeuser-Hahn I."/>
            <person name="Vaupel M."/>
            <person name="Koopmann E."/>
            <person name="Friedrich G."/>
            <person name="Voss H."/>
            <person name="Schlueter T."/>
            <person name="Margolis J."/>
            <person name="Platt D."/>
            <person name="Swimmer C."/>
            <person name="Gnirke A."/>
            <person name="Chen F."/>
            <person name="Vysotskaia V."/>
            <person name="Mannhaupt G."/>
            <person name="Gueldener U."/>
            <person name="Muensterkoetter M."/>
            <person name="Haase D."/>
            <person name="Oesterheld M."/>
            <person name="Mewes H.-W."/>
            <person name="Mauceli E.W."/>
            <person name="DeCaprio D."/>
            <person name="Wade C.M."/>
            <person name="Butler J."/>
            <person name="Young S.K."/>
            <person name="Jaffe D.B."/>
            <person name="Calvo S.E."/>
            <person name="Nusbaum C."/>
            <person name="Galagan J.E."/>
            <person name="Birren B.W."/>
        </authorList>
    </citation>
    <scope>NUCLEOTIDE SEQUENCE [LARGE SCALE GENOMIC DNA]</scope>
    <source>
        <strain>DSM 14603 / FGSC 9021 / UM521</strain>
    </source>
</reference>
<reference key="2">
    <citation type="submission" date="2014-09" db="EMBL/GenBank/DDBJ databases">
        <authorList>
            <person name="Gueldener U."/>
            <person name="Muensterkoetter M."/>
            <person name="Walter M.C."/>
            <person name="Mannhaupt G."/>
            <person name="Kahmann R."/>
        </authorList>
    </citation>
    <scope>GENOME REANNOTATION</scope>
    <source>
        <strain>DSM 14603 / FGSC 9021 / UM521</strain>
    </source>
</reference>
<comment type="function">
    <text evidence="1">Component of the post-replicative DNA mismatch repair system (MMR). Heterodimerizes with MSH2 to form MutS beta, which binds to DNA mismatches thereby initiating DNA repair. MSH3 provides substrate-binding and substrate specificity to the complex. When bound, the MutS beta heterodimer bends the DNA helix and shields approximately 20 base pairs. Acts mainly to repair insertion-deletion loops (IDLs) from 2 to 13 nucleotides in size, but can also repair base-base and single insertion-deletion mismatches that occur during replication. After mismatch binding, forms a ternary complex with the MutL alpha heterodimer, which is thought to be responsible for directing the downstream MMR events, including strand discrimination, excision, and resynthesis. ATP binding and hydrolysis play a pivotal role in mismatch repair functions (By similarity).</text>
</comment>
<comment type="subunit">
    <text evidence="1">Heterodimer consisting of MSH2-MSH3 (MutS beta). Forms a ternary complex with MutL alpha (MLH1-PMS1) (By similarity).</text>
</comment>
<comment type="subcellular location">
    <subcellularLocation>
        <location evidence="1">Nucleus</location>
    </subcellularLocation>
</comment>
<comment type="similarity">
    <text evidence="4">Belongs to the DNA mismatch repair MutS family. MSH3 subfamily.</text>
</comment>
<protein>
    <recommendedName>
        <fullName>DNA mismatch repair protein MSH3</fullName>
    </recommendedName>
    <alternativeName>
        <fullName>MutS protein homolog 3</fullName>
    </alternativeName>
</protein>
<organism>
    <name type="scientific">Mycosarcoma maydis</name>
    <name type="common">Corn smut fungus</name>
    <name type="synonym">Ustilago maydis</name>
    <dbReference type="NCBI Taxonomy" id="5270"/>
    <lineage>
        <taxon>Eukaryota</taxon>
        <taxon>Fungi</taxon>
        <taxon>Dikarya</taxon>
        <taxon>Basidiomycota</taxon>
        <taxon>Ustilaginomycotina</taxon>
        <taxon>Ustilaginomycetes</taxon>
        <taxon>Ustilaginales</taxon>
        <taxon>Ustilaginaceae</taxon>
        <taxon>Mycosarcoma</taxon>
    </lineage>
</organism>
<gene>
    <name type="primary">MSH3</name>
    <name type="ORF">UMAG_04275</name>
</gene>
<accession>Q4P6I8</accession>
<accession>A0A0D1DYZ2</accession>
<proteinExistence type="inferred from homology"/>
<evidence type="ECO:0000250" key="1"/>
<evidence type="ECO:0000255" key="2"/>
<evidence type="ECO:0000256" key="3">
    <source>
        <dbReference type="SAM" id="MobiDB-lite"/>
    </source>
</evidence>
<evidence type="ECO:0000305" key="4"/>
<keyword id="KW-0067">ATP-binding</keyword>
<keyword id="KW-0227">DNA damage</keyword>
<keyword id="KW-0234">DNA repair</keyword>
<keyword id="KW-0238">DNA-binding</keyword>
<keyword id="KW-0547">Nucleotide-binding</keyword>
<keyword id="KW-0539">Nucleus</keyword>
<keyword id="KW-1185">Reference proteome</keyword>
<name>MSH3_MYCMD</name>